<comment type="catalytic activity">
    <reaction evidence="1">
        <text>N-(5-phospho-beta-D-ribosyl)anthranilate = 1-(2-carboxyphenylamino)-1-deoxy-D-ribulose 5-phosphate</text>
        <dbReference type="Rhea" id="RHEA:21540"/>
        <dbReference type="ChEBI" id="CHEBI:18277"/>
        <dbReference type="ChEBI" id="CHEBI:58613"/>
        <dbReference type="EC" id="5.3.1.24"/>
    </reaction>
</comment>
<comment type="pathway">
    <text evidence="1">Amino-acid biosynthesis; L-tryptophan biosynthesis; L-tryptophan from chorismate: step 3/5.</text>
</comment>
<comment type="similarity">
    <text evidence="1">Belongs to the TrpF family.</text>
</comment>
<proteinExistence type="inferred from homology"/>
<keyword id="KW-0028">Amino-acid biosynthesis</keyword>
<keyword id="KW-0057">Aromatic amino acid biosynthesis</keyword>
<keyword id="KW-0413">Isomerase</keyword>
<keyword id="KW-1185">Reference proteome</keyword>
<keyword id="KW-0822">Tryptophan biosynthesis</keyword>
<feature type="chain" id="PRO_0000154391" description="N-(5'-phosphoribosyl)anthranilate isomerase">
    <location>
        <begin position="1"/>
        <end position="203"/>
    </location>
</feature>
<name>TRPF_CALS4</name>
<accession>Q8R9M8</accession>
<reference key="1">
    <citation type="journal article" date="2002" name="Genome Res.">
        <title>A complete sequence of the T. tengcongensis genome.</title>
        <authorList>
            <person name="Bao Q."/>
            <person name="Tian Y."/>
            <person name="Li W."/>
            <person name="Xu Z."/>
            <person name="Xuan Z."/>
            <person name="Hu S."/>
            <person name="Dong W."/>
            <person name="Yang J."/>
            <person name="Chen Y."/>
            <person name="Xue Y."/>
            <person name="Xu Y."/>
            <person name="Lai X."/>
            <person name="Huang L."/>
            <person name="Dong X."/>
            <person name="Ma Y."/>
            <person name="Ling L."/>
            <person name="Tan H."/>
            <person name="Chen R."/>
            <person name="Wang J."/>
            <person name="Yu J."/>
            <person name="Yang H."/>
        </authorList>
    </citation>
    <scope>NUCLEOTIDE SEQUENCE [LARGE SCALE GENOMIC DNA]</scope>
    <source>
        <strain>DSM 15242 / JCM 11007 / NBRC 100824 / MB4</strain>
    </source>
</reference>
<organism>
    <name type="scientific">Caldanaerobacter subterraneus subsp. tengcongensis (strain DSM 15242 / JCM 11007 / NBRC 100824 / MB4)</name>
    <name type="common">Thermoanaerobacter tengcongensis</name>
    <dbReference type="NCBI Taxonomy" id="273068"/>
    <lineage>
        <taxon>Bacteria</taxon>
        <taxon>Bacillati</taxon>
        <taxon>Bacillota</taxon>
        <taxon>Clostridia</taxon>
        <taxon>Thermoanaerobacterales</taxon>
        <taxon>Thermoanaerobacteraceae</taxon>
        <taxon>Caldanaerobacter</taxon>
    </lineage>
</organism>
<sequence>MVKVKICGLRRLEDIYYANQLQPDFIGFVFSESKRRVDLKEALEFVKRLKEGIKKVGVFVNEPVEKVMEIAEKLKLDVLQFHGDETQEYIDNFKNFTVWKAIRIRSKLDLKKTGEFKVDAFLFDSFSEKGYGGTGEAFDWNILKAYKREIPVVLSGGLKEENVEEAIKLVRPYAVDVSSGVEVGGYKDFNKMKSFIEKVRGVV</sequence>
<evidence type="ECO:0000255" key="1">
    <source>
        <dbReference type="HAMAP-Rule" id="MF_00135"/>
    </source>
</evidence>
<gene>
    <name evidence="1" type="primary">trpF</name>
    <name type="ordered locus">TTE1579</name>
</gene>
<protein>
    <recommendedName>
        <fullName evidence="1">N-(5'-phosphoribosyl)anthranilate isomerase</fullName>
        <shortName evidence="1">PRAI</shortName>
        <ecNumber evidence="1">5.3.1.24</ecNumber>
    </recommendedName>
</protein>
<dbReference type="EC" id="5.3.1.24" evidence="1"/>
<dbReference type="EMBL" id="AE008691">
    <property type="protein sequence ID" value="AAM24783.1"/>
    <property type="molecule type" value="Genomic_DNA"/>
</dbReference>
<dbReference type="RefSeq" id="WP_011025816.1">
    <property type="nucleotide sequence ID" value="NC_003869.1"/>
</dbReference>
<dbReference type="SMR" id="Q8R9M8"/>
<dbReference type="STRING" id="273068.TTE1579"/>
<dbReference type="KEGG" id="tte:TTE1579"/>
<dbReference type="eggNOG" id="COG0135">
    <property type="taxonomic scope" value="Bacteria"/>
</dbReference>
<dbReference type="HOGENOM" id="CLU_076364_1_0_9"/>
<dbReference type="OrthoDB" id="9786954at2"/>
<dbReference type="UniPathway" id="UPA00035">
    <property type="reaction ID" value="UER00042"/>
</dbReference>
<dbReference type="Proteomes" id="UP000000555">
    <property type="component" value="Chromosome"/>
</dbReference>
<dbReference type="GO" id="GO:0004640">
    <property type="term" value="F:phosphoribosylanthranilate isomerase activity"/>
    <property type="evidence" value="ECO:0007669"/>
    <property type="project" value="UniProtKB-UniRule"/>
</dbReference>
<dbReference type="GO" id="GO:0000162">
    <property type="term" value="P:L-tryptophan biosynthetic process"/>
    <property type="evidence" value="ECO:0007669"/>
    <property type="project" value="UniProtKB-UniRule"/>
</dbReference>
<dbReference type="CDD" id="cd00405">
    <property type="entry name" value="PRAI"/>
    <property type="match status" value="1"/>
</dbReference>
<dbReference type="FunFam" id="3.20.20.70:FF:000075">
    <property type="entry name" value="Tryptophan biosynthesis protein TRP1"/>
    <property type="match status" value="1"/>
</dbReference>
<dbReference type="Gene3D" id="3.20.20.70">
    <property type="entry name" value="Aldolase class I"/>
    <property type="match status" value="1"/>
</dbReference>
<dbReference type="HAMAP" id="MF_00135">
    <property type="entry name" value="PRAI"/>
    <property type="match status" value="1"/>
</dbReference>
<dbReference type="InterPro" id="IPR013785">
    <property type="entry name" value="Aldolase_TIM"/>
</dbReference>
<dbReference type="InterPro" id="IPR001240">
    <property type="entry name" value="PRAI_dom"/>
</dbReference>
<dbReference type="InterPro" id="IPR011060">
    <property type="entry name" value="RibuloseP-bd_barrel"/>
</dbReference>
<dbReference type="InterPro" id="IPR044643">
    <property type="entry name" value="TrpF_fam"/>
</dbReference>
<dbReference type="PANTHER" id="PTHR42894">
    <property type="entry name" value="N-(5'-PHOSPHORIBOSYL)ANTHRANILATE ISOMERASE"/>
    <property type="match status" value="1"/>
</dbReference>
<dbReference type="PANTHER" id="PTHR42894:SF1">
    <property type="entry name" value="N-(5'-PHOSPHORIBOSYL)ANTHRANILATE ISOMERASE"/>
    <property type="match status" value="1"/>
</dbReference>
<dbReference type="Pfam" id="PF00697">
    <property type="entry name" value="PRAI"/>
    <property type="match status" value="1"/>
</dbReference>
<dbReference type="SUPFAM" id="SSF51366">
    <property type="entry name" value="Ribulose-phoshate binding barrel"/>
    <property type="match status" value="1"/>
</dbReference>